<protein>
    <recommendedName>
        <fullName evidence="1">Oxygen-dependent coproporphyrinogen-III oxidase</fullName>
        <shortName evidence="1">CPO</shortName>
        <shortName evidence="1">Coprogen oxidase</shortName>
        <shortName evidence="1">Coproporphyrinogenase</shortName>
        <ecNumber evidence="1">1.3.3.3</ecNumber>
    </recommendedName>
</protein>
<feature type="chain" id="PRO_0000109911" description="Oxygen-dependent coproporphyrinogen-III oxidase">
    <location>
        <begin position="1"/>
        <end position="303"/>
    </location>
</feature>
<feature type="region of interest" description="Important for dimerization" evidence="1">
    <location>
        <begin position="241"/>
        <end position="276"/>
    </location>
</feature>
<feature type="active site" description="Proton donor" evidence="1">
    <location>
        <position position="107"/>
    </location>
</feature>
<feature type="binding site" evidence="1">
    <location>
        <position position="93"/>
    </location>
    <ligand>
        <name>substrate</name>
    </ligand>
</feature>
<feature type="binding site" evidence="1">
    <location>
        <position position="97"/>
    </location>
    <ligand>
        <name>a divalent metal cation</name>
        <dbReference type="ChEBI" id="CHEBI:60240"/>
    </ligand>
</feature>
<feature type="binding site" evidence="1">
    <location>
        <position position="107"/>
    </location>
    <ligand>
        <name>a divalent metal cation</name>
        <dbReference type="ChEBI" id="CHEBI:60240"/>
    </ligand>
</feature>
<feature type="binding site" evidence="1">
    <location>
        <begin position="109"/>
        <end position="111"/>
    </location>
    <ligand>
        <name>substrate</name>
    </ligand>
</feature>
<feature type="binding site" evidence="1">
    <location>
        <position position="146"/>
    </location>
    <ligand>
        <name>a divalent metal cation</name>
        <dbReference type="ChEBI" id="CHEBI:60240"/>
    </ligand>
</feature>
<feature type="binding site" evidence="1">
    <location>
        <position position="176"/>
    </location>
    <ligand>
        <name>a divalent metal cation</name>
        <dbReference type="ChEBI" id="CHEBI:60240"/>
    </ligand>
</feature>
<feature type="binding site" evidence="1">
    <location>
        <begin position="259"/>
        <end position="261"/>
    </location>
    <ligand>
        <name>substrate</name>
    </ligand>
</feature>
<feature type="site" description="Important for dimerization" evidence="1">
    <location>
        <position position="176"/>
    </location>
</feature>
<evidence type="ECO:0000255" key="1">
    <source>
        <dbReference type="HAMAP-Rule" id="MF_00333"/>
    </source>
</evidence>
<gene>
    <name evidence="1" type="primary">hemF</name>
    <name type="ordered locus">PP_0073</name>
</gene>
<accession>Q88RQ6</accession>
<reference key="1">
    <citation type="journal article" date="2002" name="Environ. Microbiol.">
        <title>Complete genome sequence and comparative analysis of the metabolically versatile Pseudomonas putida KT2440.</title>
        <authorList>
            <person name="Nelson K.E."/>
            <person name="Weinel C."/>
            <person name="Paulsen I.T."/>
            <person name="Dodson R.J."/>
            <person name="Hilbert H."/>
            <person name="Martins dos Santos V.A.P."/>
            <person name="Fouts D.E."/>
            <person name="Gill S.R."/>
            <person name="Pop M."/>
            <person name="Holmes M."/>
            <person name="Brinkac L.M."/>
            <person name="Beanan M.J."/>
            <person name="DeBoy R.T."/>
            <person name="Daugherty S.C."/>
            <person name="Kolonay J.F."/>
            <person name="Madupu R."/>
            <person name="Nelson W.C."/>
            <person name="White O."/>
            <person name="Peterson J.D."/>
            <person name="Khouri H.M."/>
            <person name="Hance I."/>
            <person name="Chris Lee P."/>
            <person name="Holtzapple E.K."/>
            <person name="Scanlan D."/>
            <person name="Tran K."/>
            <person name="Moazzez A."/>
            <person name="Utterback T.R."/>
            <person name="Rizzo M."/>
            <person name="Lee K."/>
            <person name="Kosack D."/>
            <person name="Moestl D."/>
            <person name="Wedler H."/>
            <person name="Lauber J."/>
            <person name="Stjepandic D."/>
            <person name="Hoheisel J."/>
            <person name="Straetz M."/>
            <person name="Heim S."/>
            <person name="Kiewitz C."/>
            <person name="Eisen J.A."/>
            <person name="Timmis K.N."/>
            <person name="Duesterhoeft A."/>
            <person name="Tuemmler B."/>
            <person name="Fraser C.M."/>
        </authorList>
    </citation>
    <scope>NUCLEOTIDE SEQUENCE [LARGE SCALE GENOMIC DNA]</scope>
    <source>
        <strain>ATCC 47054 / DSM 6125 / CFBP 8728 / NCIMB 11950 / KT2440</strain>
    </source>
</reference>
<name>HEM6_PSEPK</name>
<keyword id="KW-0963">Cytoplasm</keyword>
<keyword id="KW-0350">Heme biosynthesis</keyword>
<keyword id="KW-0479">Metal-binding</keyword>
<keyword id="KW-0560">Oxidoreductase</keyword>
<keyword id="KW-0627">Porphyrin biosynthesis</keyword>
<keyword id="KW-1185">Reference proteome</keyword>
<comment type="function">
    <text evidence="1">Involved in the heme biosynthesis. Catalyzes the aerobic oxidative decarboxylation of propionate groups of rings A and B of coproporphyrinogen-III to yield the vinyl groups in protoporphyrinogen-IX.</text>
</comment>
<comment type="catalytic activity">
    <reaction evidence="1">
        <text>coproporphyrinogen III + O2 + 2 H(+) = protoporphyrinogen IX + 2 CO2 + 2 H2O</text>
        <dbReference type="Rhea" id="RHEA:18257"/>
        <dbReference type="ChEBI" id="CHEBI:15377"/>
        <dbReference type="ChEBI" id="CHEBI:15378"/>
        <dbReference type="ChEBI" id="CHEBI:15379"/>
        <dbReference type="ChEBI" id="CHEBI:16526"/>
        <dbReference type="ChEBI" id="CHEBI:57307"/>
        <dbReference type="ChEBI" id="CHEBI:57309"/>
        <dbReference type="EC" id="1.3.3.3"/>
    </reaction>
</comment>
<comment type="cofactor">
    <cofactor evidence="1">
        <name>a divalent metal cation</name>
        <dbReference type="ChEBI" id="CHEBI:60240"/>
    </cofactor>
</comment>
<comment type="pathway">
    <text evidence="1">Porphyrin-containing compound metabolism; protoporphyrin-IX biosynthesis; protoporphyrinogen-IX from coproporphyrinogen-III (O2 route): step 1/1.</text>
</comment>
<comment type="subunit">
    <text evidence="1">Homodimer.</text>
</comment>
<comment type="subcellular location">
    <subcellularLocation>
        <location evidence="1">Cytoplasm</location>
    </subcellularLocation>
</comment>
<comment type="similarity">
    <text evidence="1">Belongs to the aerobic coproporphyrinogen-III oxidase family.</text>
</comment>
<organism>
    <name type="scientific">Pseudomonas putida (strain ATCC 47054 / DSM 6125 / CFBP 8728 / NCIMB 11950 / KT2440)</name>
    <dbReference type="NCBI Taxonomy" id="160488"/>
    <lineage>
        <taxon>Bacteria</taxon>
        <taxon>Pseudomonadati</taxon>
        <taxon>Pseudomonadota</taxon>
        <taxon>Gammaproteobacteria</taxon>
        <taxon>Pseudomonadales</taxon>
        <taxon>Pseudomonadaceae</taxon>
        <taxon>Pseudomonas</taxon>
    </lineage>
</organism>
<proteinExistence type="inferred from homology"/>
<dbReference type="EC" id="1.3.3.3" evidence="1"/>
<dbReference type="EMBL" id="AE015451">
    <property type="protein sequence ID" value="AAN65707.1"/>
    <property type="molecule type" value="Genomic_DNA"/>
</dbReference>
<dbReference type="RefSeq" id="NP_742243.1">
    <property type="nucleotide sequence ID" value="NC_002947.4"/>
</dbReference>
<dbReference type="RefSeq" id="WP_010951479.1">
    <property type="nucleotide sequence ID" value="NZ_CP169744.1"/>
</dbReference>
<dbReference type="SMR" id="Q88RQ6"/>
<dbReference type="STRING" id="160488.PP_0073"/>
<dbReference type="PaxDb" id="160488-PP_0073"/>
<dbReference type="GeneID" id="83677319"/>
<dbReference type="KEGG" id="ppu:PP_0073"/>
<dbReference type="PATRIC" id="fig|160488.4.peg.78"/>
<dbReference type="eggNOG" id="COG0408">
    <property type="taxonomic scope" value="Bacteria"/>
</dbReference>
<dbReference type="HOGENOM" id="CLU_026169_0_1_6"/>
<dbReference type="OrthoDB" id="9777553at2"/>
<dbReference type="PhylomeDB" id="Q88RQ6"/>
<dbReference type="BioCyc" id="PPUT160488:G1G01-78-MONOMER"/>
<dbReference type="UniPathway" id="UPA00251">
    <property type="reaction ID" value="UER00322"/>
</dbReference>
<dbReference type="Proteomes" id="UP000000556">
    <property type="component" value="Chromosome"/>
</dbReference>
<dbReference type="GO" id="GO:0005737">
    <property type="term" value="C:cytoplasm"/>
    <property type="evidence" value="ECO:0007669"/>
    <property type="project" value="UniProtKB-SubCell"/>
</dbReference>
<dbReference type="GO" id="GO:0004109">
    <property type="term" value="F:coproporphyrinogen oxidase activity"/>
    <property type="evidence" value="ECO:0007669"/>
    <property type="project" value="UniProtKB-UniRule"/>
</dbReference>
<dbReference type="GO" id="GO:0046872">
    <property type="term" value="F:metal ion binding"/>
    <property type="evidence" value="ECO:0007669"/>
    <property type="project" value="UniProtKB-KW"/>
</dbReference>
<dbReference type="GO" id="GO:0042803">
    <property type="term" value="F:protein homodimerization activity"/>
    <property type="evidence" value="ECO:0000250"/>
    <property type="project" value="UniProtKB"/>
</dbReference>
<dbReference type="GO" id="GO:0006782">
    <property type="term" value="P:protoporphyrinogen IX biosynthetic process"/>
    <property type="evidence" value="ECO:0007669"/>
    <property type="project" value="UniProtKB-UniRule"/>
</dbReference>
<dbReference type="FunFam" id="3.40.1500.10:FF:000001">
    <property type="entry name" value="Oxygen-dependent coproporphyrinogen-III oxidase"/>
    <property type="match status" value="1"/>
</dbReference>
<dbReference type="Gene3D" id="3.40.1500.10">
    <property type="entry name" value="Coproporphyrinogen III oxidase, aerobic"/>
    <property type="match status" value="1"/>
</dbReference>
<dbReference type="HAMAP" id="MF_00333">
    <property type="entry name" value="Coprogen_oxidas"/>
    <property type="match status" value="1"/>
</dbReference>
<dbReference type="InterPro" id="IPR001260">
    <property type="entry name" value="Coprogen_oxidase_aer"/>
</dbReference>
<dbReference type="InterPro" id="IPR036406">
    <property type="entry name" value="Coprogen_oxidase_aer_sf"/>
</dbReference>
<dbReference type="InterPro" id="IPR018375">
    <property type="entry name" value="Coprogen_oxidase_CS"/>
</dbReference>
<dbReference type="NCBIfam" id="NF003727">
    <property type="entry name" value="PRK05330.1"/>
    <property type="match status" value="1"/>
</dbReference>
<dbReference type="PANTHER" id="PTHR10755">
    <property type="entry name" value="COPROPORPHYRINOGEN III OXIDASE, MITOCHONDRIAL"/>
    <property type="match status" value="1"/>
</dbReference>
<dbReference type="PANTHER" id="PTHR10755:SF0">
    <property type="entry name" value="OXYGEN-DEPENDENT COPROPORPHYRINOGEN-III OXIDASE, MITOCHONDRIAL"/>
    <property type="match status" value="1"/>
</dbReference>
<dbReference type="Pfam" id="PF01218">
    <property type="entry name" value="Coprogen_oxidas"/>
    <property type="match status" value="1"/>
</dbReference>
<dbReference type="PIRSF" id="PIRSF000166">
    <property type="entry name" value="Coproporphyri_ox"/>
    <property type="match status" value="1"/>
</dbReference>
<dbReference type="PRINTS" id="PR00073">
    <property type="entry name" value="COPRGNOXDASE"/>
</dbReference>
<dbReference type="SUPFAM" id="SSF102886">
    <property type="entry name" value="Coproporphyrinogen III oxidase"/>
    <property type="match status" value="1"/>
</dbReference>
<dbReference type="PROSITE" id="PS01021">
    <property type="entry name" value="COPROGEN_OXIDASE"/>
    <property type="match status" value="1"/>
</dbReference>
<sequence length="303" mass="34393">MTSRTEAVKAYLLDLQDRICSALETEDGGARFVEDAWVREAGGGGRTRVIGEGNVIEKGGVNFSHVFGSGLPPSASAHRPELAGRGFEALGVSLVIHPHNPHVPTSHANVRFFIAEKEGEEAVWWFGGGFDLTPYYGNEEDCIHWHRVAEQACAPFGADVYPRYKAWCDRYFHLKHRGEPRGIGGLFFDDLNEWDFDTCFAFIRAIGDAFVDAYLPIVQRRKNTPYTPQQREFQEYRRGRYVEFNLVYDRGTLFGLQSGGRTESILMSLPPQVRWGYDWKAAPGSEEARLTEYFLQDRDWLGQ</sequence>